<protein>
    <recommendedName>
        <fullName>Dwarfin sma-4</fullName>
    </recommendedName>
    <alternativeName>
        <fullName>MAD protein homolog 3</fullName>
    </alternativeName>
</protein>
<reference key="1">
    <citation type="journal article" date="1996" name="Proc. Natl. Acad. Sci. U.S.A.">
        <title>Caenorhabditis elegans genes sma-2, sma-3, and sma-4 define a conserved family of transforming growth factor beta pathway components.</title>
        <authorList>
            <person name="Savage C."/>
            <person name="Das P."/>
            <person name="Finelli A.L."/>
            <person name="Townsend S.R."/>
            <person name="Sun C.-Y."/>
            <person name="Baird S.E."/>
            <person name="Padgett R.W."/>
        </authorList>
    </citation>
    <scope>NUCLEOTIDE SEQUENCE [MRNA]</scope>
    <source>
        <strain>Bristol N2</strain>
    </source>
</reference>
<reference key="2">
    <citation type="journal article" date="1998" name="Science">
        <title>Genome sequence of the nematode C. elegans: a platform for investigating biology.</title>
        <authorList>
            <consortium name="The C. elegans sequencing consortium"/>
        </authorList>
    </citation>
    <scope>NUCLEOTIDE SEQUENCE [LARGE SCALE GENOMIC DNA]</scope>
    <source>
        <strain>Bristol N2</strain>
    </source>
</reference>
<reference key="3">
    <citation type="journal article" date="1995" name="Genetics">
        <title>Genetic characterization and cloning of mothers against dpp, a gene required for decapentaplegic function in Drosophila melanogaster.</title>
        <authorList>
            <person name="Sekelsky J.J."/>
            <person name="Newfeld S.J."/>
            <person name="Raftery L.A."/>
            <person name="Chartoff E.H."/>
            <person name="Gelbart W.M."/>
        </authorList>
    </citation>
    <scope>GENE NAME CEM-3</scope>
</reference>
<organism>
    <name type="scientific">Caenorhabditis elegans</name>
    <dbReference type="NCBI Taxonomy" id="6239"/>
    <lineage>
        <taxon>Eukaryota</taxon>
        <taxon>Metazoa</taxon>
        <taxon>Ecdysozoa</taxon>
        <taxon>Nematoda</taxon>
        <taxon>Chromadorea</taxon>
        <taxon>Rhabditida</taxon>
        <taxon>Rhabditina</taxon>
        <taxon>Rhabditomorpha</taxon>
        <taxon>Rhabditoidea</taxon>
        <taxon>Rhabditidae</taxon>
        <taxon>Peloderinae</taxon>
        <taxon>Caenorhabditis</taxon>
    </lineage>
</organism>
<name>SMA4_CAEEL</name>
<evidence type="ECO:0000250" key="1"/>
<evidence type="ECO:0000255" key="2">
    <source>
        <dbReference type="PROSITE-ProRule" id="PRU00438"/>
    </source>
</evidence>
<evidence type="ECO:0000255" key="3">
    <source>
        <dbReference type="PROSITE-ProRule" id="PRU00439"/>
    </source>
</evidence>
<evidence type="ECO:0000256" key="4">
    <source>
        <dbReference type="SAM" id="MobiDB-lite"/>
    </source>
</evidence>
<evidence type="ECO:0000305" key="5"/>
<gene>
    <name type="primary">sma-4</name>
    <name type="synonym">cem-3</name>
    <name type="ORF">R12B2.1</name>
</gene>
<dbReference type="EMBL" id="U34596">
    <property type="protein sequence ID" value="AAA97605.1"/>
    <property type="molecule type" value="mRNA"/>
</dbReference>
<dbReference type="EMBL" id="FO081686">
    <property type="protein sequence ID" value="CCD73313.1"/>
    <property type="status" value="ALT_INIT"/>
    <property type="molecule type" value="Genomic_DNA"/>
</dbReference>
<dbReference type="PIR" id="T16725">
    <property type="entry name" value="T16725"/>
</dbReference>
<dbReference type="RefSeq" id="NP_001040864.1">
    <property type="nucleotide sequence ID" value="NM_001047399.2"/>
</dbReference>
<dbReference type="SMR" id="P45897"/>
<dbReference type="BioGRID" id="41038">
    <property type="interactions" value="41"/>
</dbReference>
<dbReference type="FunCoup" id="P45897">
    <property type="interactions" value="2577"/>
</dbReference>
<dbReference type="IntAct" id="P45897">
    <property type="interactions" value="21"/>
</dbReference>
<dbReference type="STRING" id="6239.R12B2.1a.1"/>
<dbReference type="PaxDb" id="6239-R12B2.1a.3"/>
<dbReference type="EnsemblMetazoa" id="R12B2.1a.1">
    <property type="protein sequence ID" value="R12B2.1a.1"/>
    <property type="gene ID" value="WBGene00004858"/>
</dbReference>
<dbReference type="EnsemblMetazoa" id="R12B2.1a.2">
    <property type="protein sequence ID" value="R12B2.1a.2"/>
    <property type="gene ID" value="WBGene00004858"/>
</dbReference>
<dbReference type="GeneID" id="175815"/>
<dbReference type="KEGG" id="cel:CELE_R12B2.1"/>
<dbReference type="UCSC" id="R12B2.1a.1">
    <property type="organism name" value="c. elegans"/>
</dbReference>
<dbReference type="AGR" id="WB:WBGene00004858"/>
<dbReference type="CTD" id="175815"/>
<dbReference type="WormBase" id="R12B2.1a">
    <property type="protein sequence ID" value="CE25077"/>
    <property type="gene ID" value="WBGene00004858"/>
    <property type="gene designation" value="sma-4"/>
</dbReference>
<dbReference type="eggNOG" id="KOG3701">
    <property type="taxonomic scope" value="Eukaryota"/>
</dbReference>
<dbReference type="HOGENOM" id="CLU_026736_1_2_1"/>
<dbReference type="InParanoid" id="P45897"/>
<dbReference type="OrthoDB" id="5875866at2759"/>
<dbReference type="PhylomeDB" id="P45897"/>
<dbReference type="Reactome" id="R-CEL-1181150">
    <property type="pathway name" value="Signaling by NODAL"/>
</dbReference>
<dbReference type="Reactome" id="R-CEL-1502540">
    <property type="pathway name" value="Signaling by Activin"/>
</dbReference>
<dbReference type="Reactome" id="R-CEL-201451">
    <property type="pathway name" value="Signaling by BMP"/>
</dbReference>
<dbReference type="Reactome" id="R-CEL-2173789">
    <property type="pathway name" value="TGF-beta receptor signaling activates SMADs"/>
</dbReference>
<dbReference type="Reactome" id="R-CEL-2173795">
    <property type="pathway name" value="Downregulation of SMAD2/3:SMAD4 transcriptional activity"/>
</dbReference>
<dbReference type="Reactome" id="R-CEL-2173796">
    <property type="pathway name" value="SMAD2/SMAD3:SMAD4 heterotrimer regulates transcription"/>
</dbReference>
<dbReference type="Reactome" id="R-CEL-5689880">
    <property type="pathway name" value="Ub-specific processing proteases"/>
</dbReference>
<dbReference type="Reactome" id="R-CEL-8941326">
    <property type="pathway name" value="RUNX2 regulates bone development"/>
</dbReference>
<dbReference type="Reactome" id="R-CEL-8941855">
    <property type="pathway name" value="RUNX3 regulates CDKN1A transcription"/>
</dbReference>
<dbReference type="Reactome" id="R-CEL-9617828">
    <property type="pathway name" value="FOXO-mediated transcription of cell cycle genes"/>
</dbReference>
<dbReference type="SignaLink" id="P45897"/>
<dbReference type="PRO" id="PR:P45897"/>
<dbReference type="Proteomes" id="UP000001940">
    <property type="component" value="Chromosome III"/>
</dbReference>
<dbReference type="Bgee" id="WBGene00004858">
    <property type="expression patterns" value="Expressed in larva and 3 other cell types or tissues"/>
</dbReference>
<dbReference type="ExpressionAtlas" id="P45897">
    <property type="expression patterns" value="baseline and differential"/>
</dbReference>
<dbReference type="GO" id="GO:0005737">
    <property type="term" value="C:cytoplasm"/>
    <property type="evidence" value="ECO:0007669"/>
    <property type="project" value="UniProtKB-SubCell"/>
</dbReference>
<dbReference type="GO" id="GO:0071144">
    <property type="term" value="C:heteromeric SMAD protein complex"/>
    <property type="evidence" value="ECO:0000318"/>
    <property type="project" value="GO_Central"/>
</dbReference>
<dbReference type="GO" id="GO:0000981">
    <property type="term" value="F:DNA-binding transcription factor activity, RNA polymerase II-specific"/>
    <property type="evidence" value="ECO:0000318"/>
    <property type="project" value="GO_Central"/>
</dbReference>
<dbReference type="GO" id="GO:0070411">
    <property type="term" value="F:I-SMAD binding"/>
    <property type="evidence" value="ECO:0000318"/>
    <property type="project" value="GO_Central"/>
</dbReference>
<dbReference type="GO" id="GO:0046872">
    <property type="term" value="F:metal ion binding"/>
    <property type="evidence" value="ECO:0007669"/>
    <property type="project" value="UniProtKB-KW"/>
</dbReference>
<dbReference type="GO" id="GO:0000978">
    <property type="term" value="F:RNA polymerase II cis-regulatory region sequence-specific DNA binding"/>
    <property type="evidence" value="ECO:0000318"/>
    <property type="project" value="GO_Central"/>
</dbReference>
<dbReference type="GO" id="GO:0009653">
    <property type="term" value="P:anatomical structure morphogenesis"/>
    <property type="evidence" value="ECO:0000318"/>
    <property type="project" value="GO_Central"/>
</dbReference>
<dbReference type="GO" id="GO:0030509">
    <property type="term" value="P:BMP signaling pathway"/>
    <property type="evidence" value="ECO:0000318"/>
    <property type="project" value="GO_Central"/>
</dbReference>
<dbReference type="GO" id="GO:0030154">
    <property type="term" value="P:cell differentiation"/>
    <property type="evidence" value="ECO:0000318"/>
    <property type="project" value="GO_Central"/>
</dbReference>
<dbReference type="GO" id="GO:0040024">
    <property type="term" value="P:dauer larval development"/>
    <property type="evidence" value="ECO:0000316"/>
    <property type="project" value="WormBase"/>
</dbReference>
<dbReference type="GO" id="GO:0008340">
    <property type="term" value="P:determination of adult lifespan"/>
    <property type="evidence" value="ECO:0000315"/>
    <property type="project" value="UniProtKB"/>
</dbReference>
<dbReference type="GO" id="GO:0002119">
    <property type="term" value="P:nematode larval development"/>
    <property type="evidence" value="ECO:0000315"/>
    <property type="project" value="WormBase"/>
</dbReference>
<dbReference type="GO" id="GO:0045138">
    <property type="term" value="P:nematode male tail tip morphogenesis"/>
    <property type="evidence" value="ECO:0000315"/>
    <property type="project" value="WormBase"/>
</dbReference>
<dbReference type="GO" id="GO:0007567">
    <property type="term" value="P:parturition"/>
    <property type="evidence" value="ECO:0000315"/>
    <property type="project" value="UniProtKB"/>
</dbReference>
<dbReference type="GO" id="GO:0030307">
    <property type="term" value="P:positive regulation of cell growth"/>
    <property type="evidence" value="ECO:0000315"/>
    <property type="project" value="UniProtKB"/>
</dbReference>
<dbReference type="GO" id="GO:0045793">
    <property type="term" value="P:positive regulation of cell size"/>
    <property type="evidence" value="ECO:0000315"/>
    <property type="project" value="WormBase"/>
</dbReference>
<dbReference type="GO" id="GO:0040018">
    <property type="term" value="P:positive regulation of multicellular organism growth"/>
    <property type="evidence" value="ECO:0000315"/>
    <property type="project" value="UniProtKB"/>
</dbReference>
<dbReference type="GO" id="GO:0046622">
    <property type="term" value="P:positive regulation of organ growth"/>
    <property type="evidence" value="ECO:0000315"/>
    <property type="project" value="WormBase"/>
</dbReference>
<dbReference type="GO" id="GO:0045732">
    <property type="term" value="P:positive regulation of protein catabolic process"/>
    <property type="evidence" value="ECO:0000315"/>
    <property type="project" value="WormBase"/>
</dbReference>
<dbReference type="GO" id="GO:0009791">
    <property type="term" value="P:post-embryonic development"/>
    <property type="evidence" value="ECO:0000316"/>
    <property type="project" value="UniProtKB"/>
</dbReference>
<dbReference type="GO" id="GO:0042661">
    <property type="term" value="P:regulation of mesodermal cell fate specification"/>
    <property type="evidence" value="ECO:0000316"/>
    <property type="project" value="UniProtKB"/>
</dbReference>
<dbReference type="GO" id="GO:0006357">
    <property type="term" value="P:regulation of transcription by RNA polymerase II"/>
    <property type="evidence" value="ECO:0000318"/>
    <property type="project" value="GO_Central"/>
</dbReference>
<dbReference type="GO" id="GO:0060395">
    <property type="term" value="P:SMAD protein signal transduction"/>
    <property type="evidence" value="ECO:0000318"/>
    <property type="project" value="GO_Central"/>
</dbReference>
<dbReference type="CDD" id="cd10492">
    <property type="entry name" value="MH1_SMAD_4"/>
    <property type="match status" value="1"/>
</dbReference>
<dbReference type="FunFam" id="2.60.200.10:FF:000002">
    <property type="entry name" value="Mothers against decapentaplegic homolog"/>
    <property type="match status" value="1"/>
</dbReference>
<dbReference type="FunFam" id="3.90.520.10:FF:000002">
    <property type="entry name" value="Mothers against decapentaplegic homolog"/>
    <property type="match status" value="1"/>
</dbReference>
<dbReference type="Gene3D" id="2.60.200.10">
    <property type="match status" value="1"/>
</dbReference>
<dbReference type="Gene3D" id="3.90.520.10">
    <property type="entry name" value="SMAD MH1 domain"/>
    <property type="match status" value="1"/>
</dbReference>
<dbReference type="InterPro" id="IPR013790">
    <property type="entry name" value="Dwarfin"/>
</dbReference>
<dbReference type="InterPro" id="IPR003619">
    <property type="entry name" value="MAD_homology1_Dwarfin-type"/>
</dbReference>
<dbReference type="InterPro" id="IPR013019">
    <property type="entry name" value="MAD_homology_MH1"/>
</dbReference>
<dbReference type="InterPro" id="IPR017855">
    <property type="entry name" value="SMAD-like_dom_sf"/>
</dbReference>
<dbReference type="InterPro" id="IPR001132">
    <property type="entry name" value="SMAD_dom_Dwarfin-type"/>
</dbReference>
<dbReference type="InterPro" id="IPR008984">
    <property type="entry name" value="SMAD_FHA_dom_sf"/>
</dbReference>
<dbReference type="InterPro" id="IPR036578">
    <property type="entry name" value="SMAD_MH1_sf"/>
</dbReference>
<dbReference type="PANTHER" id="PTHR13703:SF45">
    <property type="entry name" value="MOTHERS AGAINST DECAPENTAPLEGIC HOMOLOG"/>
    <property type="match status" value="1"/>
</dbReference>
<dbReference type="PANTHER" id="PTHR13703">
    <property type="entry name" value="SMAD"/>
    <property type="match status" value="1"/>
</dbReference>
<dbReference type="Pfam" id="PF03165">
    <property type="entry name" value="MH1"/>
    <property type="match status" value="1"/>
</dbReference>
<dbReference type="Pfam" id="PF03166">
    <property type="entry name" value="MH2"/>
    <property type="match status" value="1"/>
</dbReference>
<dbReference type="SMART" id="SM00523">
    <property type="entry name" value="DWA"/>
    <property type="match status" value="1"/>
</dbReference>
<dbReference type="SMART" id="SM00524">
    <property type="entry name" value="DWB"/>
    <property type="match status" value="1"/>
</dbReference>
<dbReference type="SUPFAM" id="SSF56366">
    <property type="entry name" value="SMAD MH1 domain"/>
    <property type="match status" value="1"/>
</dbReference>
<dbReference type="SUPFAM" id="SSF49879">
    <property type="entry name" value="SMAD/FHA domain"/>
    <property type="match status" value="1"/>
</dbReference>
<dbReference type="PROSITE" id="PS51075">
    <property type="entry name" value="MH1"/>
    <property type="match status" value="1"/>
</dbReference>
<dbReference type="PROSITE" id="PS51076">
    <property type="entry name" value="MH2"/>
    <property type="match status" value="1"/>
</dbReference>
<keyword id="KW-0963">Cytoplasm</keyword>
<keyword id="KW-0238">DNA-binding</keyword>
<keyword id="KW-0479">Metal-binding</keyword>
<keyword id="KW-0539">Nucleus</keyword>
<keyword id="KW-1185">Reference proteome</keyword>
<keyword id="KW-0804">Transcription</keyword>
<keyword id="KW-0805">Transcription regulation</keyword>
<keyword id="KW-0862">Zinc</keyword>
<accession>P45897</accession>
<proteinExistence type="evidence at transcript level"/>
<comment type="function">
    <text>Involved in TGF-beta pathway.</text>
</comment>
<comment type="subcellular location">
    <subcellularLocation>
        <location>Cytoplasm</location>
    </subcellularLocation>
    <subcellularLocation>
        <location evidence="5">Nucleus</location>
    </subcellularLocation>
</comment>
<comment type="similarity">
    <text evidence="5">Belongs to the dwarfin/SMAD family.</text>
</comment>
<comment type="sequence caution" evidence="5">
    <conflict type="erroneous initiation">
        <sequence resource="EMBL-CDS" id="CCD73313"/>
    </conflict>
</comment>
<feature type="chain" id="PRO_0000090881" description="Dwarfin sma-4">
    <location>
        <begin position="1"/>
        <end position="570"/>
    </location>
</feature>
<feature type="domain" description="MH1" evidence="2">
    <location>
        <begin position="150"/>
        <end position="273"/>
    </location>
</feature>
<feature type="domain" description="MH2" evidence="3">
    <location>
        <begin position="350"/>
        <end position="570"/>
    </location>
</feature>
<feature type="region of interest" description="Disordered" evidence="4">
    <location>
        <begin position="115"/>
        <end position="134"/>
    </location>
</feature>
<feature type="compositionally biased region" description="Pro residues" evidence="4">
    <location>
        <begin position="121"/>
        <end position="134"/>
    </location>
</feature>
<feature type="binding site" evidence="1">
    <location>
        <position position="203"/>
    </location>
    <ligand>
        <name>Zn(2+)</name>
        <dbReference type="ChEBI" id="CHEBI:29105"/>
    </ligand>
</feature>
<feature type="binding site" evidence="1">
    <location>
        <position position="247"/>
    </location>
    <ligand>
        <name>Zn(2+)</name>
        <dbReference type="ChEBI" id="CHEBI:29105"/>
    </ligand>
</feature>
<feature type="binding site" evidence="1">
    <location>
        <position position="258"/>
    </location>
    <ligand>
        <name>Zn(2+)</name>
        <dbReference type="ChEBI" id="CHEBI:29105"/>
    </ligand>
</feature>
<feature type="binding site" evidence="1">
    <location>
        <position position="263"/>
    </location>
    <ligand>
        <name>Zn(2+)</name>
        <dbReference type="ChEBI" id="CHEBI:29105"/>
    </ligand>
</feature>
<sequence>MFHPGMTSQPSTSNQMYYDPLYGAEQIVQCNPMDYHQANILCGMQYFNNSHNRYPLLPQMPPQFTNDHPYDFPNVPTISTLDEASSFNGFLIPSQPSSYNNNNISCVFTPTPCTSSQASSQPPPTPTVNPTPIPPNAGAVLTTAMDSCQQISHVLQCYQQGGEDSDFVRKAIESLVKKLKDKRIELDALITAVTSNGKQPTGCVTIQRSLDGRLQVAGRKGVPHVVYARIWRWPKVSKNELVKLVQCQTSSDHPDNICINPYHYERVVSNRITSADQSLHVENSPMKSEYLGDAGVIDSCSDWPNTPPDNNFNGGFAPDQPQLVTPIISDIPIDLNQIYVPTPPQLLDNWCSIIYYELDTPIGETFKVSARDHGKVIVDGGMDPHGENEGRLCLGALSNVHRTEASEKARIHIGRGVELTAHADGNISITSNCKIFVRSGYLDYTHGSEYSSKAHRFTPNESSFTVFDIRWAYMQMLRRSRSSNEAVRAQAAAVAGYAPMSVMPAIMPDSGVDRMRRDFCTIAISFVKAWGDVYQRKTIKETPCWIEVTLHRPLQILDQLLKNSSQFGSS</sequence>